<name>LEXA_AFIC5</name>
<sequence length="232" mass="25510">MLTRKQYELLRFINERLKESGIPPSFDEMKDALDLRSKSGIHRLITALEERGFIRRLANRARAIEVIKLPEPALGSGGRRGFTPSVIEGNLGKARGPASFDESGEQPVAVPVMGRIAAGTPIEALQTRSHTISVPPDMLGAGEHYALEVRGDSMVEAGILDGDMALIQRSENADTGDIVVALIDEEEATLKRFRRRGASIALEPANTAYEVRILPPNRVRIQGKLIGLYRKY</sequence>
<feature type="chain" id="PRO_1000089582" description="LexA repressor">
    <location>
        <begin position="1"/>
        <end position="232"/>
    </location>
</feature>
<feature type="DNA-binding region" description="H-T-H motif" evidence="1">
    <location>
        <begin position="26"/>
        <end position="46"/>
    </location>
</feature>
<feature type="active site" description="For autocatalytic cleavage activity" evidence="1">
    <location>
        <position position="153"/>
    </location>
</feature>
<feature type="active site" description="For autocatalytic cleavage activity" evidence="1">
    <location>
        <position position="191"/>
    </location>
</feature>
<feature type="site" description="Cleavage; by autolysis" evidence="1">
    <location>
        <begin position="118"/>
        <end position="119"/>
    </location>
</feature>
<reference key="1">
    <citation type="journal article" date="2008" name="J. Bacteriol.">
        <title>Genome sequence of the chemolithoautotrophic bacterium Oligotropha carboxidovorans OM5T.</title>
        <authorList>
            <person name="Paul D."/>
            <person name="Bridges S."/>
            <person name="Burgess S.C."/>
            <person name="Dandass Y."/>
            <person name="Lawrence M.L."/>
        </authorList>
    </citation>
    <scope>NUCLEOTIDE SEQUENCE [LARGE SCALE GENOMIC DNA]</scope>
    <source>
        <strain>ATCC 49405 / DSM 1227 / KCTC 32145 / OM5</strain>
    </source>
</reference>
<reference key="2">
    <citation type="journal article" date="2011" name="J. Bacteriol.">
        <title>Complete genome sequences of the chemolithoautotrophic Oligotropha carboxidovorans strains OM4 and OM5.</title>
        <authorList>
            <person name="Volland S."/>
            <person name="Rachinger M."/>
            <person name="Strittmatter A."/>
            <person name="Daniel R."/>
            <person name="Gottschalk G."/>
            <person name="Meyer O."/>
        </authorList>
    </citation>
    <scope>NUCLEOTIDE SEQUENCE [LARGE SCALE GENOMIC DNA]</scope>
    <source>
        <strain>ATCC 49405 / DSM 1227 / KCTC 32145 / OM5</strain>
    </source>
</reference>
<accession>B6JG34</accession>
<accession>F8BRQ9</accession>
<keyword id="KW-0068">Autocatalytic cleavage</keyword>
<keyword id="KW-0227">DNA damage</keyword>
<keyword id="KW-0234">DNA repair</keyword>
<keyword id="KW-0235">DNA replication</keyword>
<keyword id="KW-0238">DNA-binding</keyword>
<keyword id="KW-0378">Hydrolase</keyword>
<keyword id="KW-1185">Reference proteome</keyword>
<keyword id="KW-0678">Repressor</keyword>
<keyword id="KW-0742">SOS response</keyword>
<keyword id="KW-0804">Transcription</keyword>
<keyword id="KW-0805">Transcription regulation</keyword>
<protein>
    <recommendedName>
        <fullName evidence="1">LexA repressor</fullName>
        <ecNumber evidence="1">3.4.21.88</ecNumber>
    </recommendedName>
</protein>
<comment type="function">
    <text evidence="1">Represses a number of genes involved in the response to DNA damage (SOS response), including recA and lexA. In the presence of single-stranded DNA, RecA interacts with LexA causing an autocatalytic cleavage which disrupts the DNA-binding part of LexA, leading to derepression of the SOS regulon and eventually DNA repair.</text>
</comment>
<comment type="catalytic activity">
    <reaction evidence="1">
        <text>Hydrolysis of Ala-|-Gly bond in repressor LexA.</text>
        <dbReference type="EC" id="3.4.21.88"/>
    </reaction>
</comment>
<comment type="subunit">
    <text evidence="1">Homodimer.</text>
</comment>
<comment type="similarity">
    <text evidence="1">Belongs to the peptidase S24 family.</text>
</comment>
<organism>
    <name type="scientific">Afipia carboxidovorans (strain ATCC 49405 / DSM 1227 / KCTC 32145 / OM5)</name>
    <name type="common">Oligotropha carboxidovorans</name>
    <dbReference type="NCBI Taxonomy" id="504832"/>
    <lineage>
        <taxon>Bacteria</taxon>
        <taxon>Pseudomonadati</taxon>
        <taxon>Pseudomonadota</taxon>
        <taxon>Alphaproteobacteria</taxon>
        <taxon>Hyphomicrobiales</taxon>
        <taxon>Nitrobacteraceae</taxon>
        <taxon>Afipia</taxon>
    </lineage>
</organism>
<evidence type="ECO:0000255" key="1">
    <source>
        <dbReference type="HAMAP-Rule" id="MF_00015"/>
    </source>
</evidence>
<dbReference type="EC" id="3.4.21.88" evidence="1"/>
<dbReference type="EMBL" id="CP001196">
    <property type="protein sequence ID" value="ACI93423.1"/>
    <property type="molecule type" value="Genomic_DNA"/>
</dbReference>
<dbReference type="EMBL" id="CP002826">
    <property type="protein sequence ID" value="AEI06439.1"/>
    <property type="molecule type" value="Genomic_DNA"/>
</dbReference>
<dbReference type="RefSeq" id="WP_012563449.1">
    <property type="nucleotide sequence ID" value="NC_015684.1"/>
</dbReference>
<dbReference type="SMR" id="B6JG34"/>
<dbReference type="STRING" id="504832.OCA5_c17250"/>
<dbReference type="MEROPS" id="S24.001"/>
<dbReference type="KEGG" id="oca:OCAR_6310"/>
<dbReference type="KEGG" id="ocg:OCA5_c17250"/>
<dbReference type="PATRIC" id="fig|504832.7.peg.1846"/>
<dbReference type="eggNOG" id="COG1974">
    <property type="taxonomic scope" value="Bacteria"/>
</dbReference>
<dbReference type="HOGENOM" id="CLU_066192_45_2_5"/>
<dbReference type="OrthoDB" id="9802364at2"/>
<dbReference type="Proteomes" id="UP000007730">
    <property type="component" value="Chromosome"/>
</dbReference>
<dbReference type="GO" id="GO:0003677">
    <property type="term" value="F:DNA binding"/>
    <property type="evidence" value="ECO:0007669"/>
    <property type="project" value="UniProtKB-UniRule"/>
</dbReference>
<dbReference type="GO" id="GO:0004252">
    <property type="term" value="F:serine-type endopeptidase activity"/>
    <property type="evidence" value="ECO:0007669"/>
    <property type="project" value="UniProtKB-UniRule"/>
</dbReference>
<dbReference type="GO" id="GO:0006281">
    <property type="term" value="P:DNA repair"/>
    <property type="evidence" value="ECO:0007669"/>
    <property type="project" value="UniProtKB-UniRule"/>
</dbReference>
<dbReference type="GO" id="GO:0006260">
    <property type="term" value="P:DNA replication"/>
    <property type="evidence" value="ECO:0007669"/>
    <property type="project" value="UniProtKB-UniRule"/>
</dbReference>
<dbReference type="GO" id="GO:0045892">
    <property type="term" value="P:negative regulation of DNA-templated transcription"/>
    <property type="evidence" value="ECO:0007669"/>
    <property type="project" value="UniProtKB-UniRule"/>
</dbReference>
<dbReference type="GO" id="GO:0006508">
    <property type="term" value="P:proteolysis"/>
    <property type="evidence" value="ECO:0007669"/>
    <property type="project" value="InterPro"/>
</dbReference>
<dbReference type="GO" id="GO:0009432">
    <property type="term" value="P:SOS response"/>
    <property type="evidence" value="ECO:0007669"/>
    <property type="project" value="UniProtKB-UniRule"/>
</dbReference>
<dbReference type="CDD" id="cd06529">
    <property type="entry name" value="S24_LexA-like"/>
    <property type="match status" value="1"/>
</dbReference>
<dbReference type="FunFam" id="1.10.10.10:FF:000102">
    <property type="entry name" value="LexA repressor"/>
    <property type="match status" value="1"/>
</dbReference>
<dbReference type="FunFam" id="2.10.109.10:FF:000001">
    <property type="entry name" value="LexA repressor"/>
    <property type="match status" value="1"/>
</dbReference>
<dbReference type="Gene3D" id="2.10.109.10">
    <property type="entry name" value="Umud Fragment, subunit A"/>
    <property type="match status" value="1"/>
</dbReference>
<dbReference type="Gene3D" id="1.10.10.10">
    <property type="entry name" value="Winged helix-like DNA-binding domain superfamily/Winged helix DNA-binding domain"/>
    <property type="match status" value="1"/>
</dbReference>
<dbReference type="HAMAP" id="MF_00015">
    <property type="entry name" value="LexA"/>
    <property type="match status" value="1"/>
</dbReference>
<dbReference type="InterPro" id="IPR006200">
    <property type="entry name" value="LexA"/>
</dbReference>
<dbReference type="InterPro" id="IPR039418">
    <property type="entry name" value="LexA-like"/>
</dbReference>
<dbReference type="InterPro" id="IPR036286">
    <property type="entry name" value="LexA/Signal_pep-like_sf"/>
</dbReference>
<dbReference type="InterPro" id="IPR006199">
    <property type="entry name" value="LexA_DNA-bd_dom"/>
</dbReference>
<dbReference type="InterPro" id="IPR050077">
    <property type="entry name" value="LexA_repressor"/>
</dbReference>
<dbReference type="InterPro" id="IPR006197">
    <property type="entry name" value="Peptidase_S24_LexA"/>
</dbReference>
<dbReference type="InterPro" id="IPR015927">
    <property type="entry name" value="Peptidase_S24_S26A/B/C"/>
</dbReference>
<dbReference type="InterPro" id="IPR036388">
    <property type="entry name" value="WH-like_DNA-bd_sf"/>
</dbReference>
<dbReference type="InterPro" id="IPR036390">
    <property type="entry name" value="WH_DNA-bd_sf"/>
</dbReference>
<dbReference type="NCBIfam" id="TIGR00498">
    <property type="entry name" value="lexA"/>
    <property type="match status" value="1"/>
</dbReference>
<dbReference type="PANTHER" id="PTHR33516">
    <property type="entry name" value="LEXA REPRESSOR"/>
    <property type="match status" value="1"/>
</dbReference>
<dbReference type="PANTHER" id="PTHR33516:SF2">
    <property type="entry name" value="LEXA REPRESSOR-RELATED"/>
    <property type="match status" value="1"/>
</dbReference>
<dbReference type="Pfam" id="PF01726">
    <property type="entry name" value="LexA_DNA_bind"/>
    <property type="match status" value="1"/>
</dbReference>
<dbReference type="Pfam" id="PF00717">
    <property type="entry name" value="Peptidase_S24"/>
    <property type="match status" value="1"/>
</dbReference>
<dbReference type="PRINTS" id="PR00726">
    <property type="entry name" value="LEXASERPTASE"/>
</dbReference>
<dbReference type="SUPFAM" id="SSF51306">
    <property type="entry name" value="LexA/Signal peptidase"/>
    <property type="match status" value="1"/>
</dbReference>
<dbReference type="SUPFAM" id="SSF46785">
    <property type="entry name" value="Winged helix' DNA-binding domain"/>
    <property type="match status" value="1"/>
</dbReference>
<proteinExistence type="inferred from homology"/>
<gene>
    <name evidence="1" type="primary">lexA</name>
    <name type="ordered locus">OCAR_6310</name>
    <name type="ordered locus">OCA5_c17250</name>
</gene>